<gene>
    <name evidence="1" type="primary">yhaM</name>
    <name type="ordered locus">BCQ_1089</name>
</gene>
<dbReference type="EC" id="3.1.-.-" evidence="1"/>
<dbReference type="EMBL" id="CP000227">
    <property type="protein sequence ID" value="ACM11519.1"/>
    <property type="molecule type" value="Genomic_DNA"/>
</dbReference>
<dbReference type="SMR" id="B9ISF7"/>
<dbReference type="KEGG" id="bcq:BCQ_1089"/>
<dbReference type="HOGENOM" id="CLU_056349_2_0_9"/>
<dbReference type="Proteomes" id="UP000000441">
    <property type="component" value="Chromosome"/>
</dbReference>
<dbReference type="GO" id="GO:0000175">
    <property type="term" value="F:3'-5'-RNA exonuclease activity"/>
    <property type="evidence" value="ECO:0007669"/>
    <property type="project" value="UniProtKB-UniRule"/>
</dbReference>
<dbReference type="GO" id="GO:0003676">
    <property type="term" value="F:nucleic acid binding"/>
    <property type="evidence" value="ECO:0007669"/>
    <property type="project" value="InterPro"/>
</dbReference>
<dbReference type="GO" id="GO:0031125">
    <property type="term" value="P:rRNA 3'-end processing"/>
    <property type="evidence" value="ECO:0007669"/>
    <property type="project" value="TreeGrafter"/>
</dbReference>
<dbReference type="CDD" id="cd00077">
    <property type="entry name" value="HDc"/>
    <property type="match status" value="1"/>
</dbReference>
<dbReference type="CDD" id="cd04492">
    <property type="entry name" value="YhaM_OBF_like"/>
    <property type="match status" value="1"/>
</dbReference>
<dbReference type="FunFam" id="1.10.3210.10:FF:000008">
    <property type="entry name" value="3'-5' exoribonuclease YhaM"/>
    <property type="match status" value="1"/>
</dbReference>
<dbReference type="Gene3D" id="1.10.3210.10">
    <property type="entry name" value="Hypothetical protein af1432"/>
    <property type="match status" value="1"/>
</dbReference>
<dbReference type="Gene3D" id="2.40.50.140">
    <property type="entry name" value="Nucleic acid-binding proteins"/>
    <property type="match status" value="1"/>
</dbReference>
<dbReference type="HAMAP" id="MF_01427">
    <property type="entry name" value="3_5_Exoribonuc_YhaM"/>
    <property type="match status" value="1"/>
</dbReference>
<dbReference type="InterPro" id="IPR020873">
    <property type="entry name" value="3'-5'_exoribonuclease_YhaM"/>
</dbReference>
<dbReference type="InterPro" id="IPR003607">
    <property type="entry name" value="HD/PDEase_dom"/>
</dbReference>
<dbReference type="InterPro" id="IPR006674">
    <property type="entry name" value="HD_domain"/>
</dbReference>
<dbReference type="InterPro" id="IPR012340">
    <property type="entry name" value="NA-bd_OB-fold"/>
</dbReference>
<dbReference type="InterPro" id="IPR004365">
    <property type="entry name" value="NA-bd_OB_tRNA"/>
</dbReference>
<dbReference type="InterPro" id="IPR050798">
    <property type="entry name" value="YhaM_exoribonuc/phosphodiest"/>
</dbReference>
<dbReference type="NCBIfam" id="NF010007">
    <property type="entry name" value="PRK13480.1"/>
    <property type="match status" value="1"/>
</dbReference>
<dbReference type="PANTHER" id="PTHR37294">
    <property type="entry name" value="3'-5' EXORIBONUCLEASE YHAM"/>
    <property type="match status" value="1"/>
</dbReference>
<dbReference type="PANTHER" id="PTHR37294:SF1">
    <property type="entry name" value="3'-5' EXORIBONUCLEASE YHAM"/>
    <property type="match status" value="1"/>
</dbReference>
<dbReference type="Pfam" id="PF01966">
    <property type="entry name" value="HD"/>
    <property type="match status" value="1"/>
</dbReference>
<dbReference type="Pfam" id="PF01336">
    <property type="entry name" value="tRNA_anti-codon"/>
    <property type="match status" value="1"/>
</dbReference>
<dbReference type="SMART" id="SM00471">
    <property type="entry name" value="HDc"/>
    <property type="match status" value="1"/>
</dbReference>
<dbReference type="SUPFAM" id="SSF109604">
    <property type="entry name" value="HD-domain/PDEase-like"/>
    <property type="match status" value="1"/>
</dbReference>
<dbReference type="SUPFAM" id="SSF50249">
    <property type="entry name" value="Nucleic acid-binding proteins"/>
    <property type="match status" value="1"/>
</dbReference>
<dbReference type="PROSITE" id="PS51831">
    <property type="entry name" value="HD"/>
    <property type="match status" value="1"/>
</dbReference>
<protein>
    <recommendedName>
        <fullName evidence="1">3'-5' exoribonuclease YhaM</fullName>
        <ecNumber evidence="1">3.1.-.-</ecNumber>
    </recommendedName>
</protein>
<organism>
    <name type="scientific">Bacillus cereus (strain Q1)</name>
    <dbReference type="NCBI Taxonomy" id="361100"/>
    <lineage>
        <taxon>Bacteria</taxon>
        <taxon>Bacillati</taxon>
        <taxon>Bacillota</taxon>
        <taxon>Bacilli</taxon>
        <taxon>Bacillales</taxon>
        <taxon>Bacillaceae</taxon>
        <taxon>Bacillus</taxon>
        <taxon>Bacillus cereus group</taxon>
    </lineage>
</organism>
<sequence length="314" mass="35500">MKKKIAEYEVGEQVDVFLLIKTATKGIASNGKPFLTVILQDPSGDIEAKLWDVSPEVEKQYVAETIVKVAGDILNYKGRIQLRVKQIRVANENEVTDISDFVEKAPVKKEDMVEKITQYIFEMRNPNIQRLTRHLLNKHQNEFLDYPAATKNHHEFVSGLAYHVVSMLDLAKAISNLYPSLDKDLLYAGVILHDLGKVIELSGPISTTYTLEGNLLGHISIMVNEIGKAADELQIDAEEVLILQHIVLSHHGKAEWGSPKPPLVKEAEILHYIDNLDAKMNMMDRALGRTKPGEYTERVFALDNRSFYKPSFHN</sequence>
<name>YHAM_BACCQ</name>
<proteinExistence type="inferred from homology"/>
<evidence type="ECO:0000255" key="1">
    <source>
        <dbReference type="HAMAP-Rule" id="MF_01427"/>
    </source>
</evidence>
<evidence type="ECO:0000255" key="2">
    <source>
        <dbReference type="PROSITE-ProRule" id="PRU01175"/>
    </source>
</evidence>
<accession>B9ISF7</accession>
<reference key="1">
    <citation type="journal article" date="2009" name="J. Bacteriol.">
        <title>Complete genome sequence of the extremophilic Bacillus cereus strain Q1 with industrial applications.</title>
        <authorList>
            <person name="Xiong Z."/>
            <person name="Jiang Y."/>
            <person name="Qi D."/>
            <person name="Lu H."/>
            <person name="Yang F."/>
            <person name="Yang J."/>
            <person name="Chen L."/>
            <person name="Sun L."/>
            <person name="Xu X."/>
            <person name="Xue Y."/>
            <person name="Zhu Y."/>
            <person name="Jin Q."/>
        </authorList>
    </citation>
    <scope>NUCLEOTIDE SEQUENCE [LARGE SCALE GENOMIC DNA]</scope>
    <source>
        <strain>Q1</strain>
    </source>
</reference>
<keyword id="KW-0269">Exonuclease</keyword>
<keyword id="KW-0378">Hydrolase</keyword>
<keyword id="KW-0540">Nuclease</keyword>
<comment type="function">
    <text evidence="1">Shows a 3'-5' exoribonuclease activity.</text>
</comment>
<comment type="similarity">
    <text evidence="1">Belongs to the YhaM family.</text>
</comment>
<feature type="chain" id="PRO_1000184883" description="3'-5' exoribonuclease YhaM">
    <location>
        <begin position="1"/>
        <end position="314"/>
    </location>
</feature>
<feature type="domain" description="HD" evidence="2">
    <location>
        <begin position="163"/>
        <end position="279"/>
    </location>
</feature>